<keyword id="KW-0002">3D-structure</keyword>
<keyword id="KW-0479">Metal-binding</keyword>
<keyword id="KW-0488">Methylation</keyword>
<keyword id="KW-0520">NAD</keyword>
<keyword id="KW-0560">Oxidoreductase</keyword>
<keyword id="KW-1185">Reference proteome</keyword>
<keyword id="KW-0862">Zinc</keyword>
<gene>
    <name type="primary">adh</name>
    <name type="ordered locus">STK_25770</name>
</gene>
<proteinExistence type="evidence at protein level"/>
<evidence type="ECO:0000250" key="1"/>
<evidence type="ECO:0000305" key="2"/>
<evidence type="ECO:0007829" key="3">
    <source>
        <dbReference type="PDB" id="2EER"/>
    </source>
</evidence>
<feature type="chain" id="PRO_0000160755" description="NAD-dependent alcohol dehydrogenase">
    <location>
        <begin position="1"/>
        <end position="347"/>
    </location>
</feature>
<feature type="binding site" evidence="1">
    <location>
        <position position="38"/>
    </location>
    <ligand>
        <name>Zn(2+)</name>
        <dbReference type="ChEBI" id="CHEBI:29105"/>
        <label>1</label>
        <note>catalytic</note>
    </ligand>
</feature>
<feature type="binding site" evidence="1">
    <location>
        <position position="68"/>
    </location>
    <ligand>
        <name>Zn(2+)</name>
        <dbReference type="ChEBI" id="CHEBI:29105"/>
        <label>1</label>
        <note>catalytic</note>
    </ligand>
</feature>
<feature type="binding site" evidence="1">
    <location>
        <position position="98"/>
    </location>
    <ligand>
        <name>Zn(2+)</name>
        <dbReference type="ChEBI" id="CHEBI:29105"/>
        <label>2</label>
    </ligand>
</feature>
<feature type="binding site" evidence="1">
    <location>
        <position position="101"/>
    </location>
    <ligand>
        <name>Zn(2+)</name>
        <dbReference type="ChEBI" id="CHEBI:29105"/>
        <label>2</label>
    </ligand>
</feature>
<feature type="binding site" evidence="1">
    <location>
        <position position="104"/>
    </location>
    <ligand>
        <name>Zn(2+)</name>
        <dbReference type="ChEBI" id="CHEBI:29105"/>
        <label>2</label>
    </ligand>
</feature>
<feature type="binding site" evidence="1">
    <location>
        <position position="112"/>
    </location>
    <ligand>
        <name>Zn(2+)</name>
        <dbReference type="ChEBI" id="CHEBI:29105"/>
        <label>2</label>
    </ligand>
</feature>
<feature type="binding site" evidence="1">
    <location>
        <position position="154"/>
    </location>
    <ligand>
        <name>Zn(2+)</name>
        <dbReference type="ChEBI" id="CHEBI:29105"/>
        <label>1</label>
        <note>catalytic</note>
    </ligand>
</feature>
<feature type="modified residue" description="N6-methyllysine" evidence="1">
    <location>
        <position position="11"/>
    </location>
</feature>
<feature type="modified residue" description="N6-methyllysine" evidence="1">
    <location>
        <position position="213"/>
    </location>
</feature>
<feature type="strand" evidence="3">
    <location>
        <begin position="2"/>
        <end position="6"/>
    </location>
</feature>
<feature type="strand" evidence="3">
    <location>
        <begin position="14"/>
        <end position="17"/>
    </location>
</feature>
<feature type="strand" evidence="3">
    <location>
        <begin position="28"/>
        <end position="37"/>
    </location>
</feature>
<feature type="helix" evidence="3">
    <location>
        <begin position="40"/>
        <end position="46"/>
    </location>
</feature>
<feature type="turn" evidence="3">
    <location>
        <begin position="54"/>
        <end position="58"/>
    </location>
</feature>
<feature type="strand" evidence="3">
    <location>
        <begin position="62"/>
        <end position="65"/>
    </location>
</feature>
<feature type="strand" evidence="3">
    <location>
        <begin position="70"/>
        <end position="77"/>
    </location>
</feature>
<feature type="strand" evidence="3">
    <location>
        <begin position="89"/>
        <end position="92"/>
    </location>
</feature>
<feature type="strand" evidence="3">
    <location>
        <begin position="99"/>
        <end position="101"/>
    </location>
</feature>
<feature type="helix" evidence="3">
    <location>
        <begin position="102"/>
        <end position="105"/>
    </location>
</feature>
<feature type="helix" evidence="3">
    <location>
        <begin position="109"/>
        <end position="111"/>
    </location>
</feature>
<feature type="strand" evidence="3">
    <location>
        <begin position="116"/>
        <end position="118"/>
    </location>
</feature>
<feature type="turn" evidence="3">
    <location>
        <begin position="119"/>
        <end position="121"/>
    </location>
</feature>
<feature type="strand" evidence="3">
    <location>
        <begin position="125"/>
        <end position="133"/>
    </location>
</feature>
<feature type="helix" evidence="3">
    <location>
        <begin position="135"/>
        <end position="137"/>
    </location>
</feature>
<feature type="strand" evidence="3">
    <location>
        <begin position="138"/>
        <end position="140"/>
    </location>
</feature>
<feature type="strand" evidence="3">
    <location>
        <begin position="142"/>
        <end position="144"/>
    </location>
</feature>
<feature type="helix" evidence="3">
    <location>
        <begin position="146"/>
        <end position="149"/>
    </location>
</feature>
<feature type="helix" evidence="3">
    <location>
        <begin position="150"/>
        <end position="153"/>
    </location>
</feature>
<feature type="helix" evidence="3">
    <location>
        <begin position="155"/>
        <end position="165"/>
    </location>
</feature>
<feature type="strand" evidence="3">
    <location>
        <begin position="173"/>
        <end position="177"/>
    </location>
</feature>
<feature type="turn" evidence="3">
    <location>
        <begin position="178"/>
        <end position="180"/>
    </location>
</feature>
<feature type="helix" evidence="3">
    <location>
        <begin position="182"/>
        <end position="194"/>
    </location>
</feature>
<feature type="strand" evidence="3">
    <location>
        <begin position="198"/>
        <end position="205"/>
    </location>
</feature>
<feature type="helix" evidence="3">
    <location>
        <begin position="206"/>
        <end position="215"/>
    </location>
</feature>
<feature type="strand" evidence="3">
    <location>
        <begin position="218"/>
        <end position="222"/>
    </location>
</feature>
<feature type="turn" evidence="3">
    <location>
        <begin position="223"/>
        <end position="225"/>
    </location>
</feature>
<feature type="helix" evidence="3">
    <location>
        <begin position="228"/>
        <end position="235"/>
    </location>
</feature>
<feature type="turn" evidence="3">
    <location>
        <begin position="236"/>
        <end position="238"/>
    </location>
</feature>
<feature type="strand" evidence="3">
    <location>
        <begin position="241"/>
        <end position="247"/>
    </location>
</feature>
<feature type="helix" evidence="3">
    <location>
        <begin position="251"/>
        <end position="254"/>
    </location>
</feature>
<feature type="helix" evidence="3">
    <location>
        <begin position="257"/>
        <end position="260"/>
    </location>
</feature>
<feature type="strand" evidence="3">
    <location>
        <begin position="261"/>
        <end position="269"/>
    </location>
</feature>
<feature type="strand" evidence="3">
    <location>
        <begin position="276"/>
        <end position="280"/>
    </location>
</feature>
<feature type="helix" evidence="3">
    <location>
        <begin position="281"/>
        <end position="287"/>
    </location>
</feature>
<feature type="strand" evidence="3">
    <location>
        <begin position="290"/>
        <end position="293"/>
    </location>
</feature>
<feature type="helix" evidence="3">
    <location>
        <begin position="299"/>
        <end position="310"/>
    </location>
</feature>
<feature type="strand" evidence="3">
    <location>
        <begin position="318"/>
        <end position="323"/>
    </location>
</feature>
<feature type="helix" evidence="3">
    <location>
        <begin position="324"/>
        <end position="326"/>
    </location>
</feature>
<feature type="helix" evidence="3">
    <location>
        <begin position="327"/>
        <end position="335"/>
    </location>
</feature>
<feature type="strand" evidence="3">
    <location>
        <begin position="341"/>
        <end position="346"/>
    </location>
</feature>
<protein>
    <recommendedName>
        <fullName>NAD-dependent alcohol dehydrogenase</fullName>
        <ecNumber>1.1.1.1</ecNumber>
    </recommendedName>
</protein>
<name>ADH_SULTO</name>
<comment type="catalytic activity">
    <reaction>
        <text>a primary alcohol + NAD(+) = an aldehyde + NADH + H(+)</text>
        <dbReference type="Rhea" id="RHEA:10736"/>
        <dbReference type="ChEBI" id="CHEBI:15378"/>
        <dbReference type="ChEBI" id="CHEBI:15734"/>
        <dbReference type="ChEBI" id="CHEBI:17478"/>
        <dbReference type="ChEBI" id="CHEBI:57540"/>
        <dbReference type="ChEBI" id="CHEBI:57945"/>
        <dbReference type="EC" id="1.1.1.1"/>
    </reaction>
</comment>
<comment type="catalytic activity">
    <reaction>
        <text>a secondary alcohol + NAD(+) = a ketone + NADH + H(+)</text>
        <dbReference type="Rhea" id="RHEA:10740"/>
        <dbReference type="ChEBI" id="CHEBI:15378"/>
        <dbReference type="ChEBI" id="CHEBI:17087"/>
        <dbReference type="ChEBI" id="CHEBI:35681"/>
        <dbReference type="ChEBI" id="CHEBI:57540"/>
        <dbReference type="ChEBI" id="CHEBI:57945"/>
        <dbReference type="EC" id="1.1.1.1"/>
    </reaction>
</comment>
<comment type="cofactor">
    <cofactor evidence="1">
        <name>Zn(2+)</name>
        <dbReference type="ChEBI" id="CHEBI:29105"/>
    </cofactor>
    <text evidence="1">Binds 2 Zn(2+) ions per subunit.</text>
</comment>
<comment type="subunit">
    <text evidence="1">Homodimer and homotetramer.</text>
</comment>
<comment type="similarity">
    <text evidence="2">Belongs to the zinc-containing alcohol dehydrogenase family.</text>
</comment>
<accession>Q96XE0</accession>
<dbReference type="EC" id="1.1.1.1"/>
<dbReference type="EMBL" id="BA000023">
    <property type="protein sequence ID" value="BAB67688.1"/>
    <property type="molecule type" value="Genomic_DNA"/>
</dbReference>
<dbReference type="RefSeq" id="WP_010980662.1">
    <property type="nucleotide sequence ID" value="NC_003106.2"/>
</dbReference>
<dbReference type="PDB" id="2EER">
    <property type="method" value="X-ray"/>
    <property type="resolution" value="2.10 A"/>
    <property type="chains" value="A/B=1-347"/>
</dbReference>
<dbReference type="PDBsum" id="2EER"/>
<dbReference type="SMR" id="Q96XE0"/>
<dbReference type="STRING" id="273063.STK_25770"/>
<dbReference type="GeneID" id="1460661"/>
<dbReference type="KEGG" id="sto:STK_25770"/>
<dbReference type="PATRIC" id="fig|273063.9.peg.2903"/>
<dbReference type="eggNOG" id="arCOG01455">
    <property type="taxonomic scope" value="Archaea"/>
</dbReference>
<dbReference type="OrthoDB" id="73567at2157"/>
<dbReference type="BRENDA" id="1.1.1.1">
    <property type="organism ID" value="15396"/>
</dbReference>
<dbReference type="EvolutionaryTrace" id="Q96XE0"/>
<dbReference type="Proteomes" id="UP000001015">
    <property type="component" value="Chromosome"/>
</dbReference>
<dbReference type="GO" id="GO:0005737">
    <property type="term" value="C:cytoplasm"/>
    <property type="evidence" value="ECO:0007669"/>
    <property type="project" value="TreeGrafter"/>
</dbReference>
<dbReference type="GO" id="GO:0004022">
    <property type="term" value="F:alcohol dehydrogenase (NAD+) activity"/>
    <property type="evidence" value="ECO:0007669"/>
    <property type="project" value="UniProtKB-EC"/>
</dbReference>
<dbReference type="GO" id="GO:0008270">
    <property type="term" value="F:zinc ion binding"/>
    <property type="evidence" value="ECO:0007669"/>
    <property type="project" value="InterPro"/>
</dbReference>
<dbReference type="CDD" id="cd05284">
    <property type="entry name" value="arabinose_DH_like"/>
    <property type="match status" value="1"/>
</dbReference>
<dbReference type="FunFam" id="3.40.50.720:FF:000039">
    <property type="entry name" value="Alcohol dehydrogenase AdhP"/>
    <property type="match status" value="1"/>
</dbReference>
<dbReference type="Gene3D" id="3.90.180.10">
    <property type="entry name" value="Medium-chain alcohol dehydrogenases, catalytic domain"/>
    <property type="match status" value="1"/>
</dbReference>
<dbReference type="Gene3D" id="3.40.50.720">
    <property type="entry name" value="NAD(P)-binding Rossmann-like Domain"/>
    <property type="match status" value="1"/>
</dbReference>
<dbReference type="InterPro" id="IPR013149">
    <property type="entry name" value="ADH-like_C"/>
</dbReference>
<dbReference type="InterPro" id="IPR013154">
    <property type="entry name" value="ADH-like_N"/>
</dbReference>
<dbReference type="InterPro" id="IPR002328">
    <property type="entry name" value="ADH_Zn_CS"/>
</dbReference>
<dbReference type="InterPro" id="IPR011032">
    <property type="entry name" value="GroES-like_sf"/>
</dbReference>
<dbReference type="InterPro" id="IPR036291">
    <property type="entry name" value="NAD(P)-bd_dom_sf"/>
</dbReference>
<dbReference type="InterPro" id="IPR020843">
    <property type="entry name" value="PKS_ER"/>
</dbReference>
<dbReference type="PANTHER" id="PTHR42940">
    <property type="entry name" value="ALCOHOL DEHYDROGENASE 1-RELATED"/>
    <property type="match status" value="1"/>
</dbReference>
<dbReference type="PANTHER" id="PTHR42940:SF8">
    <property type="entry name" value="VACUOLAR PROTEIN SORTING-ASSOCIATED PROTEIN 11"/>
    <property type="match status" value="1"/>
</dbReference>
<dbReference type="Pfam" id="PF08240">
    <property type="entry name" value="ADH_N"/>
    <property type="match status" value="1"/>
</dbReference>
<dbReference type="Pfam" id="PF00107">
    <property type="entry name" value="ADH_zinc_N"/>
    <property type="match status" value="1"/>
</dbReference>
<dbReference type="SMART" id="SM00829">
    <property type="entry name" value="PKS_ER"/>
    <property type="match status" value="1"/>
</dbReference>
<dbReference type="SUPFAM" id="SSF50129">
    <property type="entry name" value="GroES-like"/>
    <property type="match status" value="1"/>
</dbReference>
<dbReference type="SUPFAM" id="SSF51735">
    <property type="entry name" value="NAD(P)-binding Rossmann-fold domains"/>
    <property type="match status" value="1"/>
</dbReference>
<dbReference type="PROSITE" id="PS00059">
    <property type="entry name" value="ADH_ZINC"/>
    <property type="match status" value="1"/>
</dbReference>
<organism>
    <name type="scientific">Sulfurisphaera tokodaii (strain DSM 16993 / JCM 10545 / NBRC 100140 / 7)</name>
    <name type="common">Sulfolobus tokodaii</name>
    <dbReference type="NCBI Taxonomy" id="273063"/>
    <lineage>
        <taxon>Archaea</taxon>
        <taxon>Thermoproteota</taxon>
        <taxon>Thermoprotei</taxon>
        <taxon>Sulfolobales</taxon>
        <taxon>Sulfolobaceae</taxon>
        <taxon>Sulfurisphaera</taxon>
    </lineage>
</organism>
<reference key="1">
    <citation type="journal article" date="2001" name="DNA Res.">
        <title>Complete genome sequence of an aerobic thermoacidophilic Crenarchaeon, Sulfolobus tokodaii strain7.</title>
        <authorList>
            <person name="Kawarabayasi Y."/>
            <person name="Hino Y."/>
            <person name="Horikawa H."/>
            <person name="Jin-no K."/>
            <person name="Takahashi M."/>
            <person name="Sekine M."/>
            <person name="Baba S."/>
            <person name="Ankai A."/>
            <person name="Kosugi H."/>
            <person name="Hosoyama A."/>
            <person name="Fukui S."/>
            <person name="Nagai Y."/>
            <person name="Nishijima K."/>
            <person name="Otsuka R."/>
            <person name="Nakazawa H."/>
            <person name="Takamiya M."/>
            <person name="Kato Y."/>
            <person name="Yoshizawa T."/>
            <person name="Tanaka T."/>
            <person name="Kudoh Y."/>
            <person name="Yamazaki J."/>
            <person name="Kushida N."/>
            <person name="Oguchi A."/>
            <person name="Aoki K."/>
            <person name="Masuda S."/>
            <person name="Yanagii M."/>
            <person name="Nishimura M."/>
            <person name="Yamagishi A."/>
            <person name="Oshima T."/>
            <person name="Kikuchi H."/>
        </authorList>
    </citation>
    <scope>NUCLEOTIDE SEQUENCE [LARGE SCALE GENOMIC DNA]</scope>
    <source>
        <strain>DSM 16993 / JCM 10545 / NBRC 100140 / 7</strain>
    </source>
</reference>
<sequence length="347" mass="37569">MRAMRLVEIGKPLKLEDIPIPKPKGSQVLIKIEAAGVCHSDVHMRQGRFGNLRIVEDLGVKLPVTLGHEIAGRIEEVGDEVVGYSKGDLVAVNPWEGEGNCYYCRIGEEHLCDSPRWLGINYDGAYAEYVLVPHYKYLYKLRRLSAVEAAPLTCSGVTTYRAVRKASLDPSKTLVVIGAGGGLGTMAIQIAKAVSGATIIGVDVREEALEAAKRAGADYVINASSQDPVSEIRRITQGKGADAVIDLNNSEKTLSIYPYVLAKQGKYVMVGLFGADLKYHAPLITLNEVQFIGSLVGNQSDFLGIMSLAEAGKVKPMVTKTMKLEEANEAIDNLENFKAVGRQVLVP</sequence>